<feature type="chain" id="PRO_0000087477" description="mRNA transport factor GFD1">
    <location>
        <begin position="1"/>
        <end position="188"/>
    </location>
</feature>
<feature type="region of interest" description="Disordered" evidence="2">
    <location>
        <begin position="1"/>
        <end position="128"/>
    </location>
</feature>
<feature type="coiled-coil region" evidence="1">
    <location>
        <begin position="119"/>
        <end position="164"/>
    </location>
</feature>
<feature type="compositionally biased region" description="Basic residues" evidence="2">
    <location>
        <begin position="18"/>
        <end position="28"/>
    </location>
</feature>
<feature type="compositionally biased region" description="Low complexity" evidence="2">
    <location>
        <begin position="29"/>
        <end position="44"/>
    </location>
</feature>
<feature type="compositionally biased region" description="Basic and acidic residues" evidence="2">
    <location>
        <begin position="59"/>
        <end position="79"/>
    </location>
</feature>
<feature type="compositionally biased region" description="Low complexity" evidence="2">
    <location>
        <begin position="112"/>
        <end position="128"/>
    </location>
</feature>
<feature type="modified residue" description="Phosphoserine" evidence="8 9 10">
    <location>
        <position position="87"/>
    </location>
</feature>
<feature type="modified residue" description="Phosphoserine" evidence="9 10">
    <location>
        <position position="106"/>
    </location>
</feature>
<feature type="modified residue" description="Phosphoserine" evidence="9">
    <location>
        <position position="111"/>
    </location>
</feature>
<feature type="helix" evidence="11">
    <location>
        <begin position="127"/>
        <end position="149"/>
    </location>
</feature>
<protein>
    <recommendedName>
        <fullName>mRNA transport factor GFD1</fullName>
    </recommendedName>
    <alternativeName>
        <fullName>Good for full DBP5 activity protein 1</fullName>
    </alternativeName>
</protein>
<keyword id="KW-0002">3D-structure</keyword>
<keyword id="KW-0175">Coiled coil</keyword>
<keyword id="KW-0963">Cytoplasm</keyword>
<keyword id="KW-0472">Membrane</keyword>
<keyword id="KW-0509">mRNA transport</keyword>
<keyword id="KW-0906">Nuclear pore complex</keyword>
<keyword id="KW-0539">Nucleus</keyword>
<keyword id="KW-0597">Phosphoprotein</keyword>
<keyword id="KW-0653">Protein transport</keyword>
<keyword id="KW-1185">Reference proteome</keyword>
<keyword id="KW-0811">Translocation</keyword>
<keyword id="KW-0813">Transport</keyword>
<accession>Q04839</accession>
<accession>D6W081</accession>
<gene>
    <name type="primary">GFD1</name>
    <name type="ordered locus">YMR255W</name>
    <name type="ORF">YM9920.09</name>
</gene>
<proteinExistence type="evidence at protein level"/>
<organism>
    <name type="scientific">Saccharomyces cerevisiae (strain ATCC 204508 / S288c)</name>
    <name type="common">Baker's yeast</name>
    <dbReference type="NCBI Taxonomy" id="559292"/>
    <lineage>
        <taxon>Eukaryota</taxon>
        <taxon>Fungi</taxon>
        <taxon>Dikarya</taxon>
        <taxon>Ascomycota</taxon>
        <taxon>Saccharomycotina</taxon>
        <taxon>Saccharomycetes</taxon>
        <taxon>Saccharomycetales</taxon>
        <taxon>Saccharomycetaceae</taxon>
        <taxon>Saccharomyces</taxon>
    </lineage>
</organism>
<name>GFD1_YEAST</name>
<reference key="1">
    <citation type="journal article" date="1998" name="Braz. J. Med. Biol. Res.">
        <title>Study of a region on yeast chromosome XIII that complements pet G199 mutants (COX7) and carries a new non-essential gene.</title>
        <authorList>
            <person name="Nobrega M.P."/>
            <person name="Graminha M.A."/>
            <person name="Troitskaya E.N."/>
            <person name="Nobrega F.G."/>
        </authorList>
    </citation>
    <scope>NUCLEOTIDE SEQUENCE [GENOMIC DNA]</scope>
</reference>
<reference key="2">
    <citation type="journal article" date="1997" name="Nature">
        <title>The nucleotide sequence of Saccharomyces cerevisiae chromosome XIII.</title>
        <authorList>
            <person name="Bowman S."/>
            <person name="Churcher C.M."/>
            <person name="Badcock K."/>
            <person name="Brown D."/>
            <person name="Chillingworth T."/>
            <person name="Connor R."/>
            <person name="Dedman K."/>
            <person name="Devlin K."/>
            <person name="Gentles S."/>
            <person name="Hamlin N."/>
            <person name="Hunt S."/>
            <person name="Jagels K."/>
            <person name="Lye G."/>
            <person name="Moule S."/>
            <person name="Odell C."/>
            <person name="Pearson D."/>
            <person name="Rajandream M.A."/>
            <person name="Rice P."/>
            <person name="Skelton J."/>
            <person name="Walsh S.V."/>
            <person name="Whitehead S."/>
            <person name="Barrell B.G."/>
        </authorList>
    </citation>
    <scope>NUCLEOTIDE SEQUENCE [LARGE SCALE GENOMIC DNA]</scope>
    <source>
        <strain>ATCC 204508 / S288c</strain>
    </source>
</reference>
<reference key="3">
    <citation type="journal article" date="2014" name="G3 (Bethesda)">
        <title>The reference genome sequence of Saccharomyces cerevisiae: Then and now.</title>
        <authorList>
            <person name="Engel S.R."/>
            <person name="Dietrich F.S."/>
            <person name="Fisk D.G."/>
            <person name="Binkley G."/>
            <person name="Balakrishnan R."/>
            <person name="Costanzo M.C."/>
            <person name="Dwight S.S."/>
            <person name="Hitz B.C."/>
            <person name="Karra K."/>
            <person name="Nash R.S."/>
            <person name="Weng S."/>
            <person name="Wong E.D."/>
            <person name="Lloyd P."/>
            <person name="Skrzypek M.S."/>
            <person name="Miyasato S.R."/>
            <person name="Simison M."/>
            <person name="Cherry J.M."/>
        </authorList>
    </citation>
    <scope>GENOME REANNOTATION</scope>
    <source>
        <strain>ATCC 204508 / S288c</strain>
    </source>
</reference>
<reference key="4">
    <citation type="journal article" date="1999" name="EMBO J.">
        <title>The RNA export factor Gle1p is located on the cytoplasmic fibrils of the NPC and physically interacts with the FG-nucleoporin Rip1p, the DEAD-box protein Rat8p/Dbp5p and a new protein Ymr255p.</title>
        <authorList>
            <person name="Strahm Y."/>
            <person name="Fahrenkrog B."/>
            <person name="Zenklusen D."/>
            <person name="Rychner E."/>
            <person name="Kantor J."/>
            <person name="Rosbach M."/>
            <person name="Stutz F."/>
        </authorList>
    </citation>
    <scope>FUNCTION</scope>
    <scope>INTERACTION WITH GLE1 AND NUP42</scope>
</reference>
<reference key="5">
    <citation type="journal article" date="1999" name="EMBO J.">
        <title>Rat8p/Dbp5p is a shuttling transport factor that interacts with Rat7p/Nup159p and Gle1p and suppresses the mRNA export defect of xpo1-1 cells.</title>
        <authorList>
            <person name="Hodge C.A."/>
            <person name="Colot H.V."/>
            <person name="Stafford P."/>
            <person name="Cole C.N."/>
        </authorList>
    </citation>
    <scope>FUNCTION</scope>
    <scope>INTERACTION WITH DBP5</scope>
    <scope>SUBCELLULAR LOCATION</scope>
</reference>
<reference key="6">
    <citation type="journal article" date="2004" name="J. Biol. Chem.">
        <title>Nuclear export of the yeast mRNA-binding protein Nab2 is linked to a direct interaction with Gfd1 and to Gle1 function.</title>
        <authorList>
            <person name="Suntharalingam M."/>
            <person name="Alcazar-Roman A.R."/>
            <person name="Wente S.R."/>
        </authorList>
    </citation>
    <scope>FUNCTION</scope>
    <scope>INTERACTION WITH NAB2</scope>
</reference>
<reference key="7">
    <citation type="journal article" date="2003" name="Nature">
        <title>Global analysis of protein expression in yeast.</title>
        <authorList>
            <person name="Ghaemmaghami S."/>
            <person name="Huh W.-K."/>
            <person name="Bower K."/>
            <person name="Howson R.W."/>
            <person name="Belle A."/>
            <person name="Dephoure N."/>
            <person name="O'Shea E.K."/>
            <person name="Weissman J.S."/>
        </authorList>
    </citation>
    <scope>LEVEL OF PROTEIN EXPRESSION [LARGE SCALE ANALYSIS]</scope>
</reference>
<reference key="8">
    <citation type="journal article" date="2005" name="J. Biol. Chem.">
        <title>Physical and genetic interactions link the yeast protein Zds1p with mRNA nuclear export.</title>
        <authorList>
            <person name="Estruch F."/>
            <person name="Hodge C.A."/>
            <person name="Rodriguez-Navarro S."/>
            <person name="Cole C.N."/>
        </authorList>
    </citation>
    <scope>INTERACTION WITH ZDS1</scope>
</reference>
<reference key="9">
    <citation type="journal article" date="2005" name="Mol. Cell. Proteomics">
        <title>Quantitative phosphoproteomics applied to the yeast pheromone signaling pathway.</title>
        <authorList>
            <person name="Gruhler A."/>
            <person name="Olsen J.V."/>
            <person name="Mohammed S."/>
            <person name="Mortensen P."/>
            <person name="Faergeman N.J."/>
            <person name="Mann M."/>
            <person name="Jensen O.N."/>
        </authorList>
    </citation>
    <scope>PHOSPHORYLATION [LARGE SCALE ANALYSIS] AT SER-87</scope>
    <scope>IDENTIFICATION BY MASS SPECTROMETRY [LARGE SCALE ANALYSIS]</scope>
    <source>
        <strain>YAL6B</strain>
    </source>
</reference>
<reference key="10">
    <citation type="journal article" date="2007" name="J. Proteome Res.">
        <title>Large-scale phosphorylation analysis of alpha-factor-arrested Saccharomyces cerevisiae.</title>
        <authorList>
            <person name="Li X."/>
            <person name="Gerber S.A."/>
            <person name="Rudner A.D."/>
            <person name="Beausoleil S.A."/>
            <person name="Haas W."/>
            <person name="Villen J."/>
            <person name="Elias J.E."/>
            <person name="Gygi S.P."/>
        </authorList>
    </citation>
    <scope>PHOSPHORYLATION [LARGE SCALE ANALYSIS] AT SER-87; SER-106 AND SER-111</scope>
    <scope>IDENTIFICATION BY MASS SPECTROMETRY [LARGE SCALE ANALYSIS]</scope>
    <source>
        <strain>ADR376</strain>
    </source>
</reference>
<reference key="11">
    <citation type="journal article" date="2008" name="Mol. Cell. Proteomics">
        <title>A multidimensional chromatography technology for in-depth phosphoproteome analysis.</title>
        <authorList>
            <person name="Albuquerque C.P."/>
            <person name="Smolka M.B."/>
            <person name="Payne S.H."/>
            <person name="Bafna V."/>
            <person name="Eng J."/>
            <person name="Zhou H."/>
        </authorList>
    </citation>
    <scope>PHOSPHORYLATION [LARGE SCALE ANALYSIS] AT SER-87 AND SER-106</scope>
    <scope>IDENTIFICATION BY MASS SPECTROMETRY [LARGE SCALE ANALYSIS]</scope>
</reference>
<reference key="12">
    <citation type="journal article" date="2009" name="Science">
        <title>Global analysis of Cdk1 substrate phosphorylation sites provides insights into evolution.</title>
        <authorList>
            <person name="Holt L.J."/>
            <person name="Tuch B.B."/>
            <person name="Villen J."/>
            <person name="Johnson A.D."/>
            <person name="Gygi S.P."/>
            <person name="Morgan D.O."/>
        </authorList>
    </citation>
    <scope>IDENTIFICATION BY MASS SPECTROMETRY [LARGE SCALE ANALYSIS]</scope>
</reference>
<dbReference type="EMBL" id="AF007064">
    <property type="protein sequence ID" value="AAC50003.1"/>
    <property type="molecule type" value="Genomic_DNA"/>
</dbReference>
<dbReference type="EMBL" id="Z48639">
    <property type="protein sequence ID" value="CAA88582.1"/>
    <property type="molecule type" value="Genomic_DNA"/>
</dbReference>
<dbReference type="EMBL" id="BK006946">
    <property type="protein sequence ID" value="DAA10155.1"/>
    <property type="molecule type" value="Genomic_DNA"/>
</dbReference>
<dbReference type="PIR" id="S53077">
    <property type="entry name" value="S53077"/>
</dbReference>
<dbReference type="RefSeq" id="NP_013982.1">
    <property type="nucleotide sequence ID" value="NM_001182762.1"/>
</dbReference>
<dbReference type="PDB" id="3LCN">
    <property type="method" value="X-ray"/>
    <property type="resolution" value="2.00 A"/>
    <property type="chains" value="C/D=123-151"/>
</dbReference>
<dbReference type="PDBsum" id="3LCN"/>
<dbReference type="SMR" id="Q04839"/>
<dbReference type="BioGRID" id="35433">
    <property type="interactions" value="66"/>
</dbReference>
<dbReference type="DIP" id="DIP-1254N"/>
<dbReference type="FunCoup" id="Q04839">
    <property type="interactions" value="48"/>
</dbReference>
<dbReference type="IntAct" id="Q04839">
    <property type="interactions" value="10"/>
</dbReference>
<dbReference type="MINT" id="Q04839"/>
<dbReference type="STRING" id="4932.YMR255W"/>
<dbReference type="iPTMnet" id="Q04839"/>
<dbReference type="PaxDb" id="4932-YMR255W"/>
<dbReference type="PeptideAtlas" id="Q04839"/>
<dbReference type="EnsemblFungi" id="YMR255W_mRNA">
    <property type="protein sequence ID" value="YMR255W"/>
    <property type="gene ID" value="YMR255W"/>
</dbReference>
<dbReference type="GeneID" id="855297"/>
<dbReference type="KEGG" id="sce:YMR255W"/>
<dbReference type="AGR" id="SGD:S000004868"/>
<dbReference type="SGD" id="S000004868">
    <property type="gene designation" value="GFD1"/>
</dbReference>
<dbReference type="VEuPathDB" id="FungiDB:YMR255W"/>
<dbReference type="eggNOG" id="ENOG502SDHJ">
    <property type="taxonomic scope" value="Eukaryota"/>
</dbReference>
<dbReference type="HOGENOM" id="CLU_1442138_0_0_1"/>
<dbReference type="InParanoid" id="Q04839"/>
<dbReference type="OMA" id="ESKWADA"/>
<dbReference type="OrthoDB" id="4036638at2759"/>
<dbReference type="BioCyc" id="YEAST:G3O-32931-MONOMER"/>
<dbReference type="BioGRID-ORCS" id="855297">
    <property type="hits" value="3 hits in 10 CRISPR screens"/>
</dbReference>
<dbReference type="PRO" id="PR:Q04839"/>
<dbReference type="Proteomes" id="UP000002311">
    <property type="component" value="Chromosome XIII"/>
</dbReference>
<dbReference type="RNAct" id="Q04839">
    <property type="molecule type" value="protein"/>
</dbReference>
<dbReference type="GO" id="GO:0005737">
    <property type="term" value="C:cytoplasm"/>
    <property type="evidence" value="ECO:0000314"/>
    <property type="project" value="SGD"/>
</dbReference>
<dbReference type="GO" id="GO:0031965">
    <property type="term" value="C:nuclear membrane"/>
    <property type="evidence" value="ECO:0007669"/>
    <property type="project" value="UniProtKB-SubCell"/>
</dbReference>
<dbReference type="GO" id="GO:0005643">
    <property type="term" value="C:nuclear pore"/>
    <property type="evidence" value="ECO:0007669"/>
    <property type="project" value="UniProtKB-SubCell"/>
</dbReference>
<dbReference type="GO" id="GO:0044877">
    <property type="term" value="F:protein-containing complex binding"/>
    <property type="evidence" value="ECO:0000314"/>
    <property type="project" value="SGD"/>
</dbReference>
<dbReference type="GO" id="GO:0006406">
    <property type="term" value="P:mRNA export from nucleus"/>
    <property type="evidence" value="ECO:0000316"/>
    <property type="project" value="SGD"/>
</dbReference>
<dbReference type="GO" id="GO:0015031">
    <property type="term" value="P:protein transport"/>
    <property type="evidence" value="ECO:0007669"/>
    <property type="project" value="UniProtKB-KW"/>
</dbReference>
<dbReference type="IDEAL" id="IID50178"/>
<dbReference type="InterPro" id="IPR020401">
    <property type="entry name" value="mRNA_transport_factor_GFD1"/>
</dbReference>
<dbReference type="Pfam" id="PF17331">
    <property type="entry name" value="GFD1"/>
    <property type="match status" value="1"/>
</dbReference>
<comment type="function">
    <text evidence="3 4 6">High-copy suppressor of mutant alleles of ATP-dependent RNA helicase DBP5, which is involved in mRNA export from the nucleus. It may also play an important role in a late stage of NAB2-mRNA export.</text>
</comment>
<comment type="subunit">
    <text evidence="3 4 6 7">Interacts with GLE1, NUP42, NAB2, ZDS1 and probably DBP5. Forms a complex with GLE1 and NAB2.</text>
</comment>
<comment type="interaction">
    <interactant intactId="EBI-27549">
        <id>Q04839</id>
    </interactant>
    <interactant intactId="EBI-5617">
        <id>P20449</id>
        <label>DBP5</label>
    </interactant>
    <organismsDiffer>false</organismsDiffer>
    <experiments>2</experiments>
</comment>
<comment type="interaction">
    <interactant intactId="EBI-27549">
        <id>Q04839</id>
    </interactant>
    <interactant intactId="EBI-11770">
        <id>P32505</id>
        <label>NAB2</label>
    </interactant>
    <organismsDiffer>false</organismsDiffer>
    <experiments>8</experiments>
</comment>
<comment type="interaction">
    <interactant intactId="EBI-27549">
        <id>Q04839</id>
    </interactant>
    <interactant intactId="EBI-29626">
        <id>P50111</id>
        <label>ZDS1</label>
    </interactant>
    <organismsDiffer>false</organismsDiffer>
    <experiments>3</experiments>
</comment>
<comment type="subcellular location">
    <subcellularLocation>
        <location evidence="3">Cytoplasm</location>
    </subcellularLocation>
    <subcellularLocation>
        <location evidence="3">Nucleus</location>
        <location evidence="3">Nuclear pore complex</location>
    </subcellularLocation>
    <subcellularLocation>
        <location evidence="3">Nucleus membrane</location>
        <topology evidence="3">Peripheral membrane protein</topology>
        <orientation evidence="3">Cytoplasmic side</orientation>
    </subcellularLocation>
</comment>
<comment type="miscellaneous">
    <text evidence="5">Present with 2733 molecules/cell in log phase SD medium.</text>
</comment>
<sequence>MPLESIWADAPDEEPIKKQKPSHKRSNNNKKNNNSRWSNESSSNNKKKDSVNKVKNNKGNHESKTKNKIKETLPREKKPPHSQGKISPVSESLAINPFSQKATEISPPPVSPSKMKTTKTQSKQDTASKMKLLKKKIEEQREILQKTHHKNQQQQVLMDFLNDEGSSNWVDDDEEELILQRLKTSLKI</sequence>
<evidence type="ECO:0000255" key="1"/>
<evidence type="ECO:0000256" key="2">
    <source>
        <dbReference type="SAM" id="MobiDB-lite"/>
    </source>
</evidence>
<evidence type="ECO:0000269" key="3">
    <source>
    </source>
</evidence>
<evidence type="ECO:0000269" key="4">
    <source>
    </source>
</evidence>
<evidence type="ECO:0000269" key="5">
    <source>
    </source>
</evidence>
<evidence type="ECO:0000269" key="6">
    <source>
    </source>
</evidence>
<evidence type="ECO:0000269" key="7">
    <source>
    </source>
</evidence>
<evidence type="ECO:0007744" key="8">
    <source>
    </source>
</evidence>
<evidence type="ECO:0007744" key="9">
    <source>
    </source>
</evidence>
<evidence type="ECO:0007744" key="10">
    <source>
    </source>
</evidence>
<evidence type="ECO:0007829" key="11">
    <source>
        <dbReference type="PDB" id="3LCN"/>
    </source>
</evidence>